<comment type="subcellular location">
    <subcellularLocation>
        <location evidence="3">Secreted</location>
    </subcellularLocation>
</comment>
<feature type="signal peptide" evidence="1">
    <location>
        <begin position="1"/>
        <end position="16"/>
    </location>
</feature>
<feature type="chain" id="PRO_0000340707" description="BTB/POZ domain-containing protein 17">
    <location>
        <begin position="17"/>
        <end position="468"/>
    </location>
</feature>
<feature type="domain" description="BTB" evidence="2">
    <location>
        <begin position="51"/>
        <end position="120"/>
    </location>
</feature>
<feature type="domain" description="BACK">
    <location>
        <begin position="159"/>
        <end position="259"/>
    </location>
</feature>
<organism>
    <name type="scientific">Xenopus tropicalis</name>
    <name type="common">Western clawed frog</name>
    <name type="synonym">Silurana tropicalis</name>
    <dbReference type="NCBI Taxonomy" id="8364"/>
    <lineage>
        <taxon>Eukaryota</taxon>
        <taxon>Metazoa</taxon>
        <taxon>Chordata</taxon>
        <taxon>Craniata</taxon>
        <taxon>Vertebrata</taxon>
        <taxon>Euteleostomi</taxon>
        <taxon>Amphibia</taxon>
        <taxon>Batrachia</taxon>
        <taxon>Anura</taxon>
        <taxon>Pipoidea</taxon>
        <taxon>Pipidae</taxon>
        <taxon>Xenopodinae</taxon>
        <taxon>Xenopus</taxon>
        <taxon>Silurana</taxon>
    </lineage>
</organism>
<dbReference type="EMBL" id="BC080456">
    <property type="protein sequence ID" value="AAH80456.1"/>
    <property type="molecule type" value="mRNA"/>
</dbReference>
<dbReference type="SMR" id="Q66KD0"/>
<dbReference type="FunCoup" id="Q66KD0">
    <property type="interactions" value="636"/>
</dbReference>
<dbReference type="STRING" id="8364.ENSXETP00000003891"/>
<dbReference type="InParanoid" id="Q66KD0"/>
<dbReference type="Proteomes" id="UP000008143">
    <property type="component" value="Unplaced"/>
</dbReference>
<dbReference type="GO" id="GO:0005576">
    <property type="term" value="C:extracellular region"/>
    <property type="evidence" value="ECO:0007669"/>
    <property type="project" value="UniProtKB-SubCell"/>
</dbReference>
<dbReference type="CDD" id="cd18493">
    <property type="entry name" value="BACK_BTBD17"/>
    <property type="match status" value="1"/>
</dbReference>
<dbReference type="Gene3D" id="1.25.40.420">
    <property type="match status" value="1"/>
</dbReference>
<dbReference type="Gene3D" id="3.30.710.10">
    <property type="entry name" value="Potassium Channel Kv1.1, Chain A"/>
    <property type="match status" value="1"/>
</dbReference>
<dbReference type="InterPro" id="IPR011705">
    <property type="entry name" value="BACK"/>
</dbReference>
<dbReference type="InterPro" id="IPR051481">
    <property type="entry name" value="BTB-POZ/Galectin-3-binding"/>
</dbReference>
<dbReference type="InterPro" id="IPR000210">
    <property type="entry name" value="BTB/POZ_dom"/>
</dbReference>
<dbReference type="InterPro" id="IPR011333">
    <property type="entry name" value="SKP1/BTB/POZ_sf"/>
</dbReference>
<dbReference type="InterPro" id="IPR056184">
    <property type="entry name" value="TRAF_BTBD17"/>
</dbReference>
<dbReference type="PANTHER" id="PTHR24410:SF12">
    <property type="entry name" value="BTB_POZ DOMAIN-CONTAINING PROTEIN 17"/>
    <property type="match status" value="1"/>
</dbReference>
<dbReference type="PANTHER" id="PTHR24410">
    <property type="entry name" value="HL07962P-RELATED"/>
    <property type="match status" value="1"/>
</dbReference>
<dbReference type="Pfam" id="PF07707">
    <property type="entry name" value="BACK"/>
    <property type="match status" value="1"/>
</dbReference>
<dbReference type="Pfam" id="PF00651">
    <property type="entry name" value="BTB"/>
    <property type="match status" value="1"/>
</dbReference>
<dbReference type="Pfam" id="PF23651">
    <property type="entry name" value="TRAF_BTBD17"/>
    <property type="match status" value="1"/>
</dbReference>
<dbReference type="SMART" id="SM00875">
    <property type="entry name" value="BACK"/>
    <property type="match status" value="1"/>
</dbReference>
<dbReference type="SMART" id="SM00225">
    <property type="entry name" value="BTB"/>
    <property type="match status" value="1"/>
</dbReference>
<dbReference type="SUPFAM" id="SSF54695">
    <property type="entry name" value="POZ domain"/>
    <property type="match status" value="1"/>
</dbReference>
<dbReference type="PROSITE" id="PS50097">
    <property type="entry name" value="BTB"/>
    <property type="match status" value="1"/>
</dbReference>
<gene>
    <name type="primary">btbd17</name>
</gene>
<proteinExistence type="evidence at transcript level"/>
<accession>Q66KD0</accession>
<evidence type="ECO:0000255" key="1"/>
<evidence type="ECO:0000255" key="2">
    <source>
        <dbReference type="PROSITE-ProRule" id="PRU00037"/>
    </source>
</evidence>
<evidence type="ECO:0000305" key="3"/>
<reference key="1">
    <citation type="submission" date="2004-08" db="EMBL/GenBank/DDBJ databases">
        <authorList>
            <consortium name="NIH - Xenopus Gene Collection (XGC) project"/>
        </authorList>
    </citation>
    <scope>NUCLEOTIDE SEQUENCE [LARGE SCALE MRNA]</scope>
    <source>
        <tissue>Embryo</tissue>
    </source>
</reference>
<sequence length="468" mass="53424">MRRFCVVPLLLVLVEAAQKSDLGGDASAALINHSPMLIQRLQDLFHKGNSTDTILRIRTANSDEVKVIHVHQLLLTLQSDIFDGLLLNQSEVTLQEPAECAALFEKFIRYFYCGEISVNLNQAIPLHRLANKYHMTALQRGVTEYMKTHFSSESAQGHVVSWYHYALRMGDINLQESCLKFLAWNLSTIMSSNEWVTVSDKLMVSLLQRSDLVLQSELELFSAVEEWISKNKPDAPVIEKVLRSIRYPMISPSQLFQIQKESAVLASYHNSVQDLMFQAFQFHSASPLHFAKYFDVNCSMFVPRNYLSPSWGSQWIINNPARDDRSLTFQTQLGPSNHDTSKKMTWNALFSPRWLPVSLRPVYSESIPSSSQSNRLEEGKPRLVVTSAMSGMDFAGVTFQKTLLVGVKRQQSKVFVKHVYNVHQSTDEVFDFLLQADLQKRTSEYLIDNSLHLHIIIKPIYHSLIKAK</sequence>
<protein>
    <recommendedName>
        <fullName>BTB/POZ domain-containing protein 17</fullName>
    </recommendedName>
</protein>
<name>BTBDH_XENTR</name>
<keyword id="KW-1185">Reference proteome</keyword>
<keyword id="KW-0964">Secreted</keyword>
<keyword id="KW-0732">Signal</keyword>